<gene>
    <name type="ordered locus">MT2351</name>
</gene>
<sequence>MIPNPLEELTLEQLRSQRTSMKWRAHPADVLPLWVAEMDVKLPPTVADALRRAIDDGDTGYPYGTEYAEAVREFACQRWQWHDLEVSRTAIVPDVMLGIVEVLRLITDRGDPVIVNSPVYAPFYAFVSHDGRRVIPAPLRGDGRIDLDALQEAFSSARASSGSSGNVAYLLCNPHNPTGSVHTADELRGIAERAQRFGVRVVSDEIHAPLIPSGARFTPYLSVPGAENAFALMSASKAWNLGGLKAALAIAGREAAADLARMPEEVGHGPSHLGVIAHTAAFRTGGNWLDALLRGLDHNRTLLGALVDEHLPGVQYRWPQGTYLAWLDCRELGFDDAASDEMTEGLAVVSDLSGPARWFLDHARVALSSGHVFGIGGAGHVRINFATSRAILIEAVSRMSRSLLERR</sequence>
<proteinExistence type="inferred from homology"/>
<dbReference type="EC" id="4.4.1.13"/>
<dbReference type="EMBL" id="AE000516">
    <property type="protein sequence ID" value="AAK46636.1"/>
    <property type="status" value="ALT_INIT"/>
    <property type="molecule type" value="Genomic_DNA"/>
</dbReference>
<dbReference type="PIR" id="B70733">
    <property type="entry name" value="B70733"/>
</dbReference>
<dbReference type="RefSeq" id="WP_003899255.1">
    <property type="nucleotide sequence ID" value="NZ_KK341227.1"/>
</dbReference>
<dbReference type="SMR" id="P9WQ82"/>
<dbReference type="KEGG" id="mtc:MT2351"/>
<dbReference type="PATRIC" id="fig|83331.31.peg.2530"/>
<dbReference type="HOGENOM" id="CLU_017584_15_2_11"/>
<dbReference type="UniPathway" id="UPA00051">
    <property type="reaction ID" value="UER00078"/>
</dbReference>
<dbReference type="Proteomes" id="UP000001020">
    <property type="component" value="Chromosome"/>
</dbReference>
<dbReference type="GO" id="GO:0047804">
    <property type="term" value="F:cysteine-S-conjugate beta-lyase activity"/>
    <property type="evidence" value="ECO:0007669"/>
    <property type="project" value="UniProtKB-EC"/>
</dbReference>
<dbReference type="GO" id="GO:0030170">
    <property type="term" value="F:pyridoxal phosphate binding"/>
    <property type="evidence" value="ECO:0007669"/>
    <property type="project" value="InterPro"/>
</dbReference>
<dbReference type="GO" id="GO:0009086">
    <property type="term" value="P:methionine biosynthetic process"/>
    <property type="evidence" value="ECO:0007669"/>
    <property type="project" value="UniProtKB-KW"/>
</dbReference>
<dbReference type="CDD" id="cd00609">
    <property type="entry name" value="AAT_like"/>
    <property type="match status" value="1"/>
</dbReference>
<dbReference type="FunFam" id="3.40.640.10:FF:000150">
    <property type="entry name" value="Cystathionine beta-lyase"/>
    <property type="match status" value="1"/>
</dbReference>
<dbReference type="Gene3D" id="3.90.1150.10">
    <property type="entry name" value="Aspartate Aminotransferase, domain 1"/>
    <property type="match status" value="1"/>
</dbReference>
<dbReference type="Gene3D" id="3.40.640.10">
    <property type="entry name" value="Type I PLP-dependent aspartate aminotransferase-like (Major domain)"/>
    <property type="match status" value="1"/>
</dbReference>
<dbReference type="InterPro" id="IPR004839">
    <property type="entry name" value="Aminotransferase_I/II_large"/>
</dbReference>
<dbReference type="InterPro" id="IPR051798">
    <property type="entry name" value="Class-II_PLP-Dep_Aminotrans"/>
</dbReference>
<dbReference type="InterPro" id="IPR015424">
    <property type="entry name" value="PyrdxlP-dep_Trfase"/>
</dbReference>
<dbReference type="InterPro" id="IPR015421">
    <property type="entry name" value="PyrdxlP-dep_Trfase_major"/>
</dbReference>
<dbReference type="InterPro" id="IPR015422">
    <property type="entry name" value="PyrdxlP-dep_Trfase_small"/>
</dbReference>
<dbReference type="PANTHER" id="PTHR43525:SF2">
    <property type="entry name" value="CYSTATHIONINE BETA-LYASE-RELATED"/>
    <property type="match status" value="1"/>
</dbReference>
<dbReference type="PANTHER" id="PTHR43525">
    <property type="entry name" value="PROTEIN MALY"/>
    <property type="match status" value="1"/>
</dbReference>
<dbReference type="Pfam" id="PF00155">
    <property type="entry name" value="Aminotran_1_2"/>
    <property type="match status" value="1"/>
</dbReference>
<dbReference type="SUPFAM" id="SSF53383">
    <property type="entry name" value="PLP-dependent transferases"/>
    <property type="match status" value="1"/>
</dbReference>
<reference key="1">
    <citation type="journal article" date="2002" name="J. Bacteriol.">
        <title>Whole-genome comparison of Mycobacterium tuberculosis clinical and laboratory strains.</title>
        <authorList>
            <person name="Fleischmann R.D."/>
            <person name="Alland D."/>
            <person name="Eisen J.A."/>
            <person name="Carpenter L."/>
            <person name="White O."/>
            <person name="Peterson J.D."/>
            <person name="DeBoy R.T."/>
            <person name="Dodson R.J."/>
            <person name="Gwinn M.L."/>
            <person name="Haft D.H."/>
            <person name="Hickey E.K."/>
            <person name="Kolonay J.F."/>
            <person name="Nelson W.C."/>
            <person name="Umayam L.A."/>
            <person name="Ermolaeva M.D."/>
            <person name="Salzberg S.L."/>
            <person name="Delcher A."/>
            <person name="Utterback T.R."/>
            <person name="Weidman J.F."/>
            <person name="Khouri H.M."/>
            <person name="Gill J."/>
            <person name="Mikula A."/>
            <person name="Bishai W."/>
            <person name="Jacobs W.R. Jr."/>
            <person name="Venter J.C."/>
            <person name="Fraser C.M."/>
        </authorList>
    </citation>
    <scope>NUCLEOTIDE SEQUENCE [LARGE SCALE GENOMIC DNA]</scope>
    <source>
        <strain>CDC 1551 / Oshkosh</strain>
    </source>
</reference>
<name>CBL_MYCTO</name>
<comment type="catalytic activity">
    <reaction>
        <text>L,L-cystathionine + H2O = L-homocysteine + pyruvate + NH4(+)</text>
        <dbReference type="Rhea" id="RHEA:13965"/>
        <dbReference type="ChEBI" id="CHEBI:15361"/>
        <dbReference type="ChEBI" id="CHEBI:15377"/>
        <dbReference type="ChEBI" id="CHEBI:28938"/>
        <dbReference type="ChEBI" id="CHEBI:58161"/>
        <dbReference type="ChEBI" id="CHEBI:58199"/>
    </reaction>
</comment>
<comment type="catalytic activity">
    <reaction>
        <text>an S-substituted L-cysteine + H2O = a thiol + pyruvate + NH4(+)</text>
        <dbReference type="Rhea" id="RHEA:18121"/>
        <dbReference type="ChEBI" id="CHEBI:15361"/>
        <dbReference type="ChEBI" id="CHEBI:15377"/>
        <dbReference type="ChEBI" id="CHEBI:28938"/>
        <dbReference type="ChEBI" id="CHEBI:29256"/>
        <dbReference type="ChEBI" id="CHEBI:58717"/>
        <dbReference type="EC" id="4.4.1.13"/>
    </reaction>
</comment>
<comment type="cofactor">
    <cofactor evidence="1">
        <name>pyridoxal 5'-phosphate</name>
        <dbReference type="ChEBI" id="CHEBI:597326"/>
    </cofactor>
</comment>
<comment type="pathway">
    <text>Amino-acid biosynthesis; L-methionine biosynthesis via de novo pathway; L-homocysteine from L-cystathionine: step 1/1.</text>
</comment>
<comment type="similarity">
    <text evidence="2">Belongs to the class-II pyridoxal-phosphate-dependent aminotransferase family. MalY/PatB cystathionine beta-lyase subfamily.</text>
</comment>
<comment type="sequence caution" evidence="2">
    <conflict type="erroneous initiation">
        <sequence resource="EMBL-CDS" id="AAK46636"/>
    </conflict>
</comment>
<keyword id="KW-0028">Amino-acid biosynthesis</keyword>
<keyword id="KW-0456">Lyase</keyword>
<keyword id="KW-0486">Methionine biosynthesis</keyword>
<keyword id="KW-0663">Pyridoxal phosphate</keyword>
<keyword id="KW-1185">Reference proteome</keyword>
<feature type="chain" id="PRO_0000426821" description="Putative cystathionine beta-lyase">
    <location>
        <begin position="1"/>
        <end position="407"/>
    </location>
</feature>
<feature type="modified residue" description="N6-(pyridoxal phosphate)lysine" evidence="1">
    <location>
        <position position="237"/>
    </location>
</feature>
<protein>
    <recommendedName>
        <fullName>Putative cystathionine beta-lyase</fullName>
        <shortName>CBL</shortName>
        <ecNumber>4.4.1.13</ecNumber>
    </recommendedName>
    <alternativeName>
        <fullName>Beta-cystathionase</fullName>
    </alternativeName>
    <alternativeName>
        <fullName>Cysteine lyase</fullName>
    </alternativeName>
    <alternativeName>
        <fullName>Cysteine-S-conjugate beta-lyase</fullName>
    </alternativeName>
</protein>
<accession>P9WQ82</accession>
<accession>L0TC32</accession>
<accession>P63502</accession>
<accession>Q50672</accession>
<evidence type="ECO:0000250" key="1"/>
<evidence type="ECO:0000305" key="2"/>
<organism>
    <name type="scientific">Mycobacterium tuberculosis (strain CDC 1551 / Oshkosh)</name>
    <dbReference type="NCBI Taxonomy" id="83331"/>
    <lineage>
        <taxon>Bacteria</taxon>
        <taxon>Bacillati</taxon>
        <taxon>Actinomycetota</taxon>
        <taxon>Actinomycetes</taxon>
        <taxon>Mycobacteriales</taxon>
        <taxon>Mycobacteriaceae</taxon>
        <taxon>Mycobacterium</taxon>
        <taxon>Mycobacterium tuberculosis complex</taxon>
    </lineage>
</organism>